<proteinExistence type="inferred from homology"/>
<feature type="chain" id="PRO_1000165718" description="Large ribosomal subunit protein uL2">
    <location>
        <begin position="1"/>
        <end position="279"/>
    </location>
</feature>
<feature type="region of interest" description="Disordered" evidence="2">
    <location>
        <begin position="1"/>
        <end position="59"/>
    </location>
</feature>
<feature type="region of interest" description="Disordered" evidence="2">
    <location>
        <begin position="224"/>
        <end position="279"/>
    </location>
</feature>
<feature type="compositionally biased region" description="Basic residues" evidence="2">
    <location>
        <begin position="50"/>
        <end position="59"/>
    </location>
</feature>
<feature type="compositionally biased region" description="Basic and acidic residues" evidence="2">
    <location>
        <begin position="253"/>
        <end position="268"/>
    </location>
</feature>
<feature type="compositionally biased region" description="Basic residues" evidence="2">
    <location>
        <begin position="269"/>
        <end position="279"/>
    </location>
</feature>
<organism>
    <name type="scientific">Pseudarthrobacter chlorophenolicus (strain ATCC 700700 / DSM 12829 / CIP 107037 / JCM 12360 / KCTC 9906 / NCIMB 13794 / A6)</name>
    <name type="common">Arthrobacter chlorophenolicus</name>
    <dbReference type="NCBI Taxonomy" id="452863"/>
    <lineage>
        <taxon>Bacteria</taxon>
        <taxon>Bacillati</taxon>
        <taxon>Actinomycetota</taxon>
        <taxon>Actinomycetes</taxon>
        <taxon>Micrococcales</taxon>
        <taxon>Micrococcaceae</taxon>
        <taxon>Pseudarthrobacter</taxon>
    </lineage>
</organism>
<reference key="1">
    <citation type="submission" date="2009-01" db="EMBL/GenBank/DDBJ databases">
        <title>Complete sequence of chromosome of Arthrobacter chlorophenolicus A6.</title>
        <authorList>
            <consortium name="US DOE Joint Genome Institute"/>
            <person name="Lucas S."/>
            <person name="Copeland A."/>
            <person name="Lapidus A."/>
            <person name="Glavina del Rio T."/>
            <person name="Tice H."/>
            <person name="Bruce D."/>
            <person name="Goodwin L."/>
            <person name="Pitluck S."/>
            <person name="Goltsman E."/>
            <person name="Clum A."/>
            <person name="Larimer F."/>
            <person name="Land M."/>
            <person name="Hauser L."/>
            <person name="Kyrpides N."/>
            <person name="Mikhailova N."/>
            <person name="Jansson J."/>
            <person name="Richardson P."/>
        </authorList>
    </citation>
    <scope>NUCLEOTIDE SEQUENCE [LARGE SCALE GENOMIC DNA]</scope>
    <source>
        <strain>ATCC 700700 / DSM 12829 / CIP 107037 / JCM 12360 / KCTC 9906 / NCIMB 13794 / A6</strain>
    </source>
</reference>
<gene>
    <name evidence="1" type="primary">rplB</name>
    <name type="ordered locus">Achl_2684</name>
</gene>
<evidence type="ECO:0000255" key="1">
    <source>
        <dbReference type="HAMAP-Rule" id="MF_01320"/>
    </source>
</evidence>
<evidence type="ECO:0000256" key="2">
    <source>
        <dbReference type="SAM" id="MobiDB-lite"/>
    </source>
</evidence>
<evidence type="ECO:0000305" key="3"/>
<dbReference type="EMBL" id="CP001341">
    <property type="protein sequence ID" value="ACL40649.1"/>
    <property type="molecule type" value="Genomic_DNA"/>
</dbReference>
<dbReference type="RefSeq" id="WP_015937850.1">
    <property type="nucleotide sequence ID" value="NC_011886.1"/>
</dbReference>
<dbReference type="SMR" id="B8HD03"/>
<dbReference type="STRING" id="452863.Achl_2684"/>
<dbReference type="KEGG" id="ach:Achl_2684"/>
<dbReference type="eggNOG" id="COG0090">
    <property type="taxonomic scope" value="Bacteria"/>
</dbReference>
<dbReference type="HOGENOM" id="CLU_036235_2_1_11"/>
<dbReference type="OrthoDB" id="9778722at2"/>
<dbReference type="Proteomes" id="UP000002505">
    <property type="component" value="Chromosome"/>
</dbReference>
<dbReference type="GO" id="GO:0015934">
    <property type="term" value="C:large ribosomal subunit"/>
    <property type="evidence" value="ECO:0007669"/>
    <property type="project" value="InterPro"/>
</dbReference>
<dbReference type="GO" id="GO:0019843">
    <property type="term" value="F:rRNA binding"/>
    <property type="evidence" value="ECO:0007669"/>
    <property type="project" value="UniProtKB-UniRule"/>
</dbReference>
<dbReference type="GO" id="GO:0003735">
    <property type="term" value="F:structural constituent of ribosome"/>
    <property type="evidence" value="ECO:0007669"/>
    <property type="project" value="InterPro"/>
</dbReference>
<dbReference type="GO" id="GO:0016740">
    <property type="term" value="F:transferase activity"/>
    <property type="evidence" value="ECO:0007669"/>
    <property type="project" value="InterPro"/>
</dbReference>
<dbReference type="GO" id="GO:0002181">
    <property type="term" value="P:cytoplasmic translation"/>
    <property type="evidence" value="ECO:0007669"/>
    <property type="project" value="TreeGrafter"/>
</dbReference>
<dbReference type="FunFam" id="2.30.30.30:FF:000001">
    <property type="entry name" value="50S ribosomal protein L2"/>
    <property type="match status" value="1"/>
</dbReference>
<dbReference type="FunFam" id="2.40.50.140:FF:000003">
    <property type="entry name" value="50S ribosomal protein L2"/>
    <property type="match status" value="1"/>
</dbReference>
<dbReference type="FunFam" id="4.10.950.10:FF:000001">
    <property type="entry name" value="50S ribosomal protein L2"/>
    <property type="match status" value="1"/>
</dbReference>
<dbReference type="Gene3D" id="2.30.30.30">
    <property type="match status" value="1"/>
</dbReference>
<dbReference type="Gene3D" id="2.40.50.140">
    <property type="entry name" value="Nucleic acid-binding proteins"/>
    <property type="match status" value="1"/>
</dbReference>
<dbReference type="Gene3D" id="4.10.950.10">
    <property type="entry name" value="Ribosomal protein L2, domain 3"/>
    <property type="match status" value="1"/>
</dbReference>
<dbReference type="HAMAP" id="MF_01320_B">
    <property type="entry name" value="Ribosomal_uL2_B"/>
    <property type="match status" value="1"/>
</dbReference>
<dbReference type="InterPro" id="IPR012340">
    <property type="entry name" value="NA-bd_OB-fold"/>
</dbReference>
<dbReference type="InterPro" id="IPR014722">
    <property type="entry name" value="Rib_uL2_dom2"/>
</dbReference>
<dbReference type="InterPro" id="IPR002171">
    <property type="entry name" value="Ribosomal_uL2"/>
</dbReference>
<dbReference type="InterPro" id="IPR005880">
    <property type="entry name" value="Ribosomal_uL2_bac/org-type"/>
</dbReference>
<dbReference type="InterPro" id="IPR022669">
    <property type="entry name" value="Ribosomal_uL2_C"/>
</dbReference>
<dbReference type="InterPro" id="IPR022671">
    <property type="entry name" value="Ribosomal_uL2_CS"/>
</dbReference>
<dbReference type="InterPro" id="IPR014726">
    <property type="entry name" value="Ribosomal_uL2_dom3"/>
</dbReference>
<dbReference type="InterPro" id="IPR022666">
    <property type="entry name" value="Ribosomal_uL2_RNA-bd_dom"/>
</dbReference>
<dbReference type="InterPro" id="IPR008991">
    <property type="entry name" value="Translation_prot_SH3-like_sf"/>
</dbReference>
<dbReference type="NCBIfam" id="TIGR01171">
    <property type="entry name" value="rplB_bact"/>
    <property type="match status" value="1"/>
</dbReference>
<dbReference type="PANTHER" id="PTHR13691:SF5">
    <property type="entry name" value="LARGE RIBOSOMAL SUBUNIT PROTEIN UL2M"/>
    <property type="match status" value="1"/>
</dbReference>
<dbReference type="PANTHER" id="PTHR13691">
    <property type="entry name" value="RIBOSOMAL PROTEIN L2"/>
    <property type="match status" value="1"/>
</dbReference>
<dbReference type="Pfam" id="PF00181">
    <property type="entry name" value="Ribosomal_L2"/>
    <property type="match status" value="1"/>
</dbReference>
<dbReference type="Pfam" id="PF03947">
    <property type="entry name" value="Ribosomal_L2_C"/>
    <property type="match status" value="1"/>
</dbReference>
<dbReference type="PIRSF" id="PIRSF002158">
    <property type="entry name" value="Ribosomal_L2"/>
    <property type="match status" value="1"/>
</dbReference>
<dbReference type="SMART" id="SM01383">
    <property type="entry name" value="Ribosomal_L2"/>
    <property type="match status" value="1"/>
</dbReference>
<dbReference type="SMART" id="SM01382">
    <property type="entry name" value="Ribosomal_L2_C"/>
    <property type="match status" value="1"/>
</dbReference>
<dbReference type="SUPFAM" id="SSF50249">
    <property type="entry name" value="Nucleic acid-binding proteins"/>
    <property type="match status" value="1"/>
</dbReference>
<dbReference type="SUPFAM" id="SSF50104">
    <property type="entry name" value="Translation proteins SH3-like domain"/>
    <property type="match status" value="1"/>
</dbReference>
<dbReference type="PROSITE" id="PS00467">
    <property type="entry name" value="RIBOSOMAL_L2"/>
    <property type="match status" value="1"/>
</dbReference>
<sequence length="279" mass="30712">MGIRKYKPTTPGRRGSSVADFTEITRSTPEKSLVRPLPKKGGRNNTGKITTRHKGGGHKRQYRLIDFRRHDKDGVDARVAEIEYDPNRTARIALLHYVDGTKRYIIAPNKLSQGDFVEAGPNADIKPGNNLPLRNIPVGTVVHAVELRPGGGAKMGRSAGASIQLVAREGRFAQLRLPSGEIRNVDVRCRATVGEVGNAEQSNINWGKAGRMRWKGVRPTVRGVAMNPVDHPHGGGEGKTSGGRNPVNPNGQREGRTRRPNKESDKLIVRRRRTGKNKR</sequence>
<protein>
    <recommendedName>
        <fullName evidence="1">Large ribosomal subunit protein uL2</fullName>
    </recommendedName>
    <alternativeName>
        <fullName evidence="3">50S ribosomal protein L2</fullName>
    </alternativeName>
</protein>
<name>RL2_PSECP</name>
<keyword id="KW-0687">Ribonucleoprotein</keyword>
<keyword id="KW-0689">Ribosomal protein</keyword>
<keyword id="KW-0694">RNA-binding</keyword>
<keyword id="KW-0699">rRNA-binding</keyword>
<accession>B8HD03</accession>
<comment type="function">
    <text evidence="1">One of the primary rRNA binding proteins. Required for association of the 30S and 50S subunits to form the 70S ribosome, for tRNA binding and peptide bond formation. It has been suggested to have peptidyltransferase activity; this is somewhat controversial. Makes several contacts with the 16S rRNA in the 70S ribosome.</text>
</comment>
<comment type="subunit">
    <text evidence="1">Part of the 50S ribosomal subunit. Forms a bridge to the 30S subunit in the 70S ribosome.</text>
</comment>
<comment type="similarity">
    <text evidence="1">Belongs to the universal ribosomal protein uL2 family.</text>
</comment>